<protein>
    <recommendedName>
        <fullName evidence="1">Pantothenate synthetase</fullName>
        <shortName evidence="1">PS</shortName>
        <ecNumber evidence="1">6.3.2.1</ecNumber>
    </recommendedName>
    <alternativeName>
        <fullName evidence="1">Pantoate--beta-alanine ligase</fullName>
    </alternativeName>
    <alternativeName>
        <fullName evidence="1">Pantoate-activating enzyme</fullName>
    </alternativeName>
</protein>
<feature type="chain" id="PRO_1000076850" description="Pantothenate synthetase">
    <location>
        <begin position="1"/>
        <end position="282"/>
    </location>
</feature>
<feature type="active site" description="Proton donor" evidence="1">
    <location>
        <position position="37"/>
    </location>
</feature>
<feature type="binding site" evidence="1">
    <location>
        <begin position="30"/>
        <end position="37"/>
    </location>
    <ligand>
        <name>ATP</name>
        <dbReference type="ChEBI" id="CHEBI:30616"/>
    </ligand>
</feature>
<feature type="binding site" evidence="1">
    <location>
        <position position="60"/>
    </location>
    <ligand>
        <name>(R)-pantoate</name>
        <dbReference type="ChEBI" id="CHEBI:15980"/>
    </ligand>
</feature>
<feature type="binding site" evidence="1">
    <location>
        <position position="60"/>
    </location>
    <ligand>
        <name>beta-alanine</name>
        <dbReference type="ChEBI" id="CHEBI:57966"/>
    </ligand>
</feature>
<feature type="binding site" evidence="1">
    <location>
        <begin position="146"/>
        <end position="149"/>
    </location>
    <ligand>
        <name>ATP</name>
        <dbReference type="ChEBI" id="CHEBI:30616"/>
    </ligand>
</feature>
<feature type="binding site" evidence="1">
    <location>
        <position position="152"/>
    </location>
    <ligand>
        <name>(R)-pantoate</name>
        <dbReference type="ChEBI" id="CHEBI:15980"/>
    </ligand>
</feature>
<feature type="binding site" evidence="1">
    <location>
        <position position="175"/>
    </location>
    <ligand>
        <name>ATP</name>
        <dbReference type="ChEBI" id="CHEBI:30616"/>
    </ligand>
</feature>
<feature type="binding site" evidence="1">
    <location>
        <begin position="183"/>
        <end position="186"/>
    </location>
    <ligand>
        <name>ATP</name>
        <dbReference type="ChEBI" id="CHEBI:30616"/>
    </ligand>
</feature>
<sequence>MEVITSIKEAKQIVKNWKSHHLSIGYVPTMGFLHDGHLSLVKNAKTQDKVIVSIFVNPMQFGPNEDFSSYPRDLERDIKMCQDNGVDMVFIPDMTQMYLKNFSTYVDMNIITDKLCGAKRPGHFRGVCTVLAKFFNILNPDIVYMGQKDAQQCVVVRHMVDDLNFDLKIQICPIIREEDGLAKSSRNVYLSEEERKASLAISQSIFLAEKLVREGKKNTSKIIQAMQDILEKEKLIKIDYIELVDFNTMDNIENIADNVLGAVAVFVGETRLIDNFLVQGLK</sequence>
<dbReference type="EC" id="6.3.2.1" evidence="1"/>
<dbReference type="EMBL" id="CP000768">
    <property type="protein sequence ID" value="ABS43611.1"/>
    <property type="molecule type" value="Genomic_DNA"/>
</dbReference>
<dbReference type="SMR" id="A7H575"/>
<dbReference type="KEGG" id="cjd:JJD26997_1667"/>
<dbReference type="HOGENOM" id="CLU_047148_0_0_7"/>
<dbReference type="UniPathway" id="UPA00028">
    <property type="reaction ID" value="UER00005"/>
</dbReference>
<dbReference type="Proteomes" id="UP000002302">
    <property type="component" value="Chromosome"/>
</dbReference>
<dbReference type="GO" id="GO:0005829">
    <property type="term" value="C:cytosol"/>
    <property type="evidence" value="ECO:0007669"/>
    <property type="project" value="TreeGrafter"/>
</dbReference>
<dbReference type="GO" id="GO:0005524">
    <property type="term" value="F:ATP binding"/>
    <property type="evidence" value="ECO:0007669"/>
    <property type="project" value="UniProtKB-KW"/>
</dbReference>
<dbReference type="GO" id="GO:0004592">
    <property type="term" value="F:pantoate-beta-alanine ligase activity"/>
    <property type="evidence" value="ECO:0007669"/>
    <property type="project" value="UniProtKB-UniRule"/>
</dbReference>
<dbReference type="GO" id="GO:0015940">
    <property type="term" value="P:pantothenate biosynthetic process"/>
    <property type="evidence" value="ECO:0007669"/>
    <property type="project" value="UniProtKB-UniRule"/>
</dbReference>
<dbReference type="CDD" id="cd00560">
    <property type="entry name" value="PanC"/>
    <property type="match status" value="1"/>
</dbReference>
<dbReference type="FunFam" id="3.30.1300.10:FF:000001">
    <property type="entry name" value="Pantothenate synthetase"/>
    <property type="match status" value="1"/>
</dbReference>
<dbReference type="FunFam" id="3.40.50.620:FF:000013">
    <property type="entry name" value="Pantothenate synthetase"/>
    <property type="match status" value="1"/>
</dbReference>
<dbReference type="Gene3D" id="3.40.50.620">
    <property type="entry name" value="HUPs"/>
    <property type="match status" value="1"/>
</dbReference>
<dbReference type="Gene3D" id="3.30.1300.10">
    <property type="entry name" value="Pantoate-beta-alanine ligase, C-terminal domain"/>
    <property type="match status" value="1"/>
</dbReference>
<dbReference type="HAMAP" id="MF_00158">
    <property type="entry name" value="PanC"/>
    <property type="match status" value="1"/>
</dbReference>
<dbReference type="InterPro" id="IPR004821">
    <property type="entry name" value="Cyt_trans-like"/>
</dbReference>
<dbReference type="InterPro" id="IPR003721">
    <property type="entry name" value="Pantoate_ligase"/>
</dbReference>
<dbReference type="InterPro" id="IPR042176">
    <property type="entry name" value="Pantoate_ligase_C"/>
</dbReference>
<dbReference type="InterPro" id="IPR014729">
    <property type="entry name" value="Rossmann-like_a/b/a_fold"/>
</dbReference>
<dbReference type="NCBIfam" id="TIGR00125">
    <property type="entry name" value="cyt_tran_rel"/>
    <property type="match status" value="1"/>
</dbReference>
<dbReference type="NCBIfam" id="TIGR00018">
    <property type="entry name" value="panC"/>
    <property type="match status" value="1"/>
</dbReference>
<dbReference type="PANTHER" id="PTHR21299">
    <property type="entry name" value="CYTIDYLATE KINASE/PANTOATE-BETA-ALANINE LIGASE"/>
    <property type="match status" value="1"/>
</dbReference>
<dbReference type="PANTHER" id="PTHR21299:SF1">
    <property type="entry name" value="PANTOATE--BETA-ALANINE LIGASE"/>
    <property type="match status" value="1"/>
</dbReference>
<dbReference type="Pfam" id="PF02569">
    <property type="entry name" value="Pantoate_ligase"/>
    <property type="match status" value="1"/>
</dbReference>
<dbReference type="SUPFAM" id="SSF52374">
    <property type="entry name" value="Nucleotidylyl transferase"/>
    <property type="match status" value="1"/>
</dbReference>
<name>PANC_CAMJD</name>
<organism>
    <name type="scientific">Campylobacter jejuni subsp. doylei (strain ATCC BAA-1458 / RM4099 / 269.97)</name>
    <dbReference type="NCBI Taxonomy" id="360109"/>
    <lineage>
        <taxon>Bacteria</taxon>
        <taxon>Pseudomonadati</taxon>
        <taxon>Campylobacterota</taxon>
        <taxon>Epsilonproteobacteria</taxon>
        <taxon>Campylobacterales</taxon>
        <taxon>Campylobacteraceae</taxon>
        <taxon>Campylobacter</taxon>
    </lineage>
</organism>
<keyword id="KW-0067">ATP-binding</keyword>
<keyword id="KW-0963">Cytoplasm</keyword>
<keyword id="KW-0436">Ligase</keyword>
<keyword id="KW-0547">Nucleotide-binding</keyword>
<keyword id="KW-0566">Pantothenate biosynthesis</keyword>
<comment type="function">
    <text evidence="1">Catalyzes the condensation of pantoate with beta-alanine in an ATP-dependent reaction via a pantoyl-adenylate intermediate.</text>
</comment>
<comment type="catalytic activity">
    <reaction evidence="1">
        <text>(R)-pantoate + beta-alanine + ATP = (R)-pantothenate + AMP + diphosphate + H(+)</text>
        <dbReference type="Rhea" id="RHEA:10912"/>
        <dbReference type="ChEBI" id="CHEBI:15378"/>
        <dbReference type="ChEBI" id="CHEBI:15980"/>
        <dbReference type="ChEBI" id="CHEBI:29032"/>
        <dbReference type="ChEBI" id="CHEBI:30616"/>
        <dbReference type="ChEBI" id="CHEBI:33019"/>
        <dbReference type="ChEBI" id="CHEBI:57966"/>
        <dbReference type="ChEBI" id="CHEBI:456215"/>
        <dbReference type="EC" id="6.3.2.1"/>
    </reaction>
</comment>
<comment type="pathway">
    <text evidence="1">Cofactor biosynthesis; (R)-pantothenate biosynthesis; (R)-pantothenate from (R)-pantoate and beta-alanine: step 1/1.</text>
</comment>
<comment type="subunit">
    <text evidence="1">Homodimer.</text>
</comment>
<comment type="subcellular location">
    <subcellularLocation>
        <location evidence="1">Cytoplasm</location>
    </subcellularLocation>
</comment>
<comment type="miscellaneous">
    <text evidence="1">The reaction proceeds by a bi uni uni bi ping pong mechanism.</text>
</comment>
<comment type="similarity">
    <text evidence="1">Belongs to the pantothenate synthetase family.</text>
</comment>
<proteinExistence type="inferred from homology"/>
<reference key="1">
    <citation type="submission" date="2007-07" db="EMBL/GenBank/DDBJ databases">
        <title>Complete genome sequence of Campylobacter jejuni subsp doylei 269.97 isolated from human blood.</title>
        <authorList>
            <person name="Fouts D.E."/>
            <person name="Mongodin E.F."/>
            <person name="Puiu D."/>
            <person name="Sebastian Y."/>
            <person name="Miller W.G."/>
            <person name="Mandrell R.E."/>
            <person name="Lastovica A.J."/>
            <person name="Nelson K.E."/>
        </authorList>
    </citation>
    <scope>NUCLEOTIDE SEQUENCE [LARGE SCALE GENOMIC DNA]</scope>
    <source>
        <strain>ATCC BAA-1458 / RM4099 / 269.97</strain>
    </source>
</reference>
<accession>A7H575</accession>
<evidence type="ECO:0000255" key="1">
    <source>
        <dbReference type="HAMAP-Rule" id="MF_00158"/>
    </source>
</evidence>
<gene>
    <name evidence="1" type="primary">panC</name>
    <name type="ordered locus">JJD26997_1667</name>
</gene>